<accession>P0A069</accession>
<accession>P72365</accession>
<dbReference type="EC" id="3.4.21.89"/>
<dbReference type="EMBL" id="BA000033">
    <property type="protein sequence ID" value="BAB94712.1"/>
    <property type="molecule type" value="Genomic_DNA"/>
</dbReference>
<dbReference type="SMR" id="P0A069"/>
<dbReference type="MEROPS" id="S26.016"/>
<dbReference type="KEGG" id="sam:MW0847"/>
<dbReference type="HOGENOM" id="CLU_028723_5_0_9"/>
<dbReference type="GO" id="GO:0005886">
    <property type="term" value="C:plasma membrane"/>
    <property type="evidence" value="ECO:0007669"/>
    <property type="project" value="UniProtKB-SubCell"/>
</dbReference>
<dbReference type="GO" id="GO:0004252">
    <property type="term" value="F:serine-type endopeptidase activity"/>
    <property type="evidence" value="ECO:0007669"/>
    <property type="project" value="UniProtKB-EC"/>
</dbReference>
<dbReference type="GO" id="GO:0006465">
    <property type="term" value="P:signal peptide processing"/>
    <property type="evidence" value="ECO:0007669"/>
    <property type="project" value="InterPro"/>
</dbReference>
<dbReference type="CDD" id="cd06530">
    <property type="entry name" value="S26_SPase_I"/>
    <property type="match status" value="1"/>
</dbReference>
<dbReference type="FunFam" id="2.10.109.10:FF:000008">
    <property type="entry name" value="Signal peptidase I"/>
    <property type="match status" value="1"/>
</dbReference>
<dbReference type="Gene3D" id="2.10.109.10">
    <property type="entry name" value="Umud Fragment, subunit A"/>
    <property type="match status" value="1"/>
</dbReference>
<dbReference type="InterPro" id="IPR036286">
    <property type="entry name" value="LexA/Signal_pep-like_sf"/>
</dbReference>
<dbReference type="InterPro" id="IPR000223">
    <property type="entry name" value="Pept_S26A_signal_pept_1"/>
</dbReference>
<dbReference type="InterPro" id="IPR019758">
    <property type="entry name" value="Pept_S26A_signal_pept_1_CS"/>
</dbReference>
<dbReference type="InterPro" id="IPR019757">
    <property type="entry name" value="Pept_S26A_signal_pept_1_Lys-AS"/>
</dbReference>
<dbReference type="InterPro" id="IPR019756">
    <property type="entry name" value="Pept_S26A_signal_pept_1_Ser-AS"/>
</dbReference>
<dbReference type="InterPro" id="IPR019533">
    <property type="entry name" value="Peptidase_S26"/>
</dbReference>
<dbReference type="NCBIfam" id="TIGR02227">
    <property type="entry name" value="sigpep_I_bact"/>
    <property type="match status" value="1"/>
</dbReference>
<dbReference type="PANTHER" id="PTHR43390:SF1">
    <property type="entry name" value="CHLOROPLAST PROCESSING PEPTIDASE"/>
    <property type="match status" value="1"/>
</dbReference>
<dbReference type="PANTHER" id="PTHR43390">
    <property type="entry name" value="SIGNAL PEPTIDASE I"/>
    <property type="match status" value="1"/>
</dbReference>
<dbReference type="Pfam" id="PF10502">
    <property type="entry name" value="Peptidase_S26"/>
    <property type="match status" value="1"/>
</dbReference>
<dbReference type="PRINTS" id="PR00727">
    <property type="entry name" value="LEADERPTASE"/>
</dbReference>
<dbReference type="SUPFAM" id="SSF51306">
    <property type="entry name" value="LexA/Signal peptidase"/>
    <property type="match status" value="1"/>
</dbReference>
<dbReference type="PROSITE" id="PS00501">
    <property type="entry name" value="SPASE_I_1"/>
    <property type="match status" value="1"/>
</dbReference>
<dbReference type="PROSITE" id="PS00760">
    <property type="entry name" value="SPASE_I_2"/>
    <property type="match status" value="1"/>
</dbReference>
<dbReference type="PROSITE" id="PS00761">
    <property type="entry name" value="SPASE_I_3"/>
    <property type="match status" value="1"/>
</dbReference>
<keyword id="KW-1003">Cell membrane</keyword>
<keyword id="KW-0378">Hydrolase</keyword>
<keyword id="KW-0472">Membrane</keyword>
<keyword id="KW-0645">Protease</keyword>
<keyword id="KW-0812">Transmembrane</keyword>
<keyword id="KW-1133">Transmembrane helix</keyword>
<protein>
    <recommendedName>
        <fullName>Signal peptidase IB</fullName>
        <shortName>SPase IB</shortName>
        <ecNumber>3.4.21.89</ecNumber>
    </recommendedName>
    <alternativeName>
        <fullName>Leader peptidase IB</fullName>
    </alternativeName>
</protein>
<evidence type="ECO:0000250" key="1"/>
<evidence type="ECO:0000255" key="2"/>
<evidence type="ECO:0000305" key="3"/>
<reference key="1">
    <citation type="journal article" date="2002" name="Lancet">
        <title>Genome and virulence determinants of high virulence community-acquired MRSA.</title>
        <authorList>
            <person name="Baba T."/>
            <person name="Takeuchi F."/>
            <person name="Kuroda M."/>
            <person name="Yuzawa H."/>
            <person name="Aoki K."/>
            <person name="Oguchi A."/>
            <person name="Nagai Y."/>
            <person name="Iwama N."/>
            <person name="Asano K."/>
            <person name="Naimi T."/>
            <person name="Kuroda H."/>
            <person name="Cui L."/>
            <person name="Yamamoto K."/>
            <person name="Hiramatsu K."/>
        </authorList>
    </citation>
    <scope>NUCLEOTIDE SEQUENCE [LARGE SCALE GENOMIC DNA]</scope>
    <source>
        <strain>MW2</strain>
    </source>
</reference>
<comment type="function">
    <text evidence="1">Essential for cell viability.</text>
</comment>
<comment type="catalytic activity">
    <reaction>
        <text>Cleavage of hydrophobic, N-terminal signal or leader sequences from secreted and periplasmic proteins.</text>
        <dbReference type="EC" id="3.4.21.89"/>
    </reaction>
</comment>
<comment type="subcellular location">
    <subcellularLocation>
        <location evidence="3">Cell membrane</location>
        <topology evidence="3">Single-pass type II membrane protein</topology>
    </subcellularLocation>
</comment>
<comment type="similarity">
    <text evidence="3">Belongs to the peptidase S26 family.</text>
</comment>
<gene>
    <name type="primary">spsB</name>
    <name type="ordered locus">MW0847</name>
</gene>
<name>LEP_STAAW</name>
<feature type="chain" id="PRO_0000109531" description="Signal peptidase IB">
    <location>
        <begin position="1"/>
        <end position="191"/>
    </location>
</feature>
<feature type="topological domain" description="Cytoplasmic" evidence="2">
    <location>
        <begin position="1"/>
        <end position="7"/>
    </location>
</feature>
<feature type="transmembrane region" description="Helical" evidence="2">
    <location>
        <begin position="8"/>
        <end position="28"/>
    </location>
</feature>
<feature type="topological domain" description="Extracellular" evidence="2">
    <location>
        <begin position="29"/>
        <end position="191"/>
    </location>
</feature>
<feature type="active site" evidence="1">
    <location>
        <position position="36"/>
    </location>
</feature>
<feature type="active site" evidence="1">
    <location>
        <position position="77"/>
    </location>
</feature>
<proteinExistence type="inferred from homology"/>
<organism>
    <name type="scientific">Staphylococcus aureus (strain MW2)</name>
    <dbReference type="NCBI Taxonomy" id="196620"/>
    <lineage>
        <taxon>Bacteria</taxon>
        <taxon>Bacillati</taxon>
        <taxon>Bacillota</taxon>
        <taxon>Bacilli</taxon>
        <taxon>Bacillales</taxon>
        <taxon>Staphylococcaceae</taxon>
        <taxon>Staphylococcus</taxon>
    </lineage>
</organism>
<sequence>MKKELLEWIISIAVAFVILFIVGKFIVTPYTIKGESMDPTLKDGERVAVNIIGYKTGGLEKGNVVVFHANKNDDYVKRVIGVPGDKVEYKNDTLYVNGKKQDEPYLNYNLKHKQGDYITGTFQVKDLPNANPKSNVIPKGKYLVLGDNREVSKDSRAFGLIDEDQIVGKVSFRFWPFSEFKHNFNPENTKN</sequence>